<sequence length="244" mass="26031">MKLLKNKKVTFVALLAILAVLSTQSVSAMHIMEGYLPLFWCIFWFAVFLPFFVVGLMRIKKIVAEDPNSKTMLALSGAFIFILSSLKIPSVTGSSSHPTGVGLGTAMFGPSVISVLGTICLLFQALLLAHGGLTTLGANAFSMAVVGPFVGYFVYKFAKSIKLSTPVSIFICAVIADLATYATTSIQLGLVFPDANSGFVGSALKFMGVFLTTQIPIAIVEGLLTVVLYNLISENVKERAGLFK</sequence>
<reference key="1">
    <citation type="journal article" date="2007" name="J. Bacteriol.">
        <title>Genome of the opportunistic pathogen Streptococcus sanguinis.</title>
        <authorList>
            <person name="Xu P."/>
            <person name="Alves J.M."/>
            <person name="Kitten T."/>
            <person name="Brown A."/>
            <person name="Chen Z."/>
            <person name="Ozaki L.S."/>
            <person name="Manque P."/>
            <person name="Ge X."/>
            <person name="Serrano M.G."/>
            <person name="Puiu D."/>
            <person name="Hendricks S."/>
            <person name="Wang Y."/>
            <person name="Chaplin M.D."/>
            <person name="Akan D."/>
            <person name="Paik S."/>
            <person name="Peterson D.L."/>
            <person name="Macrina F.L."/>
            <person name="Buck G.A."/>
        </authorList>
    </citation>
    <scope>NUCLEOTIDE SEQUENCE [LARGE SCALE GENOMIC DNA]</scope>
    <source>
        <strain>SK36</strain>
    </source>
</reference>
<feature type="signal peptide" evidence="1">
    <location>
        <begin position="1"/>
        <end position="28"/>
    </location>
</feature>
<feature type="chain" id="PRO_0000411148" description="Cobalt transport protein CbiM">
    <location>
        <begin position="29"/>
        <end position="244"/>
    </location>
</feature>
<feature type="transmembrane region" description="Helical" evidence="1">
    <location>
        <begin position="36"/>
        <end position="56"/>
    </location>
</feature>
<feature type="transmembrane region" description="Helical" evidence="1">
    <location>
        <begin position="71"/>
        <end position="91"/>
    </location>
</feature>
<feature type="transmembrane region" description="Helical" evidence="1">
    <location>
        <begin position="108"/>
        <end position="128"/>
    </location>
</feature>
<feature type="transmembrane region" description="Helical" evidence="1">
    <location>
        <begin position="135"/>
        <end position="155"/>
    </location>
</feature>
<feature type="transmembrane region" description="Helical" evidence="1">
    <location>
        <begin position="166"/>
        <end position="186"/>
    </location>
</feature>
<feature type="transmembrane region" description="Helical" evidence="1">
    <location>
        <begin position="208"/>
        <end position="228"/>
    </location>
</feature>
<protein>
    <recommendedName>
        <fullName evidence="1">Cobalt transport protein CbiM</fullName>
    </recommendedName>
    <alternativeName>
        <fullName evidence="1">Energy-coupling factor transporter probable substrate-capture protein CbiM</fullName>
        <shortName evidence="1">ECF transporter S component CbiM</shortName>
    </alternativeName>
</protein>
<organism>
    <name type="scientific">Streptococcus sanguinis (strain SK36)</name>
    <dbReference type="NCBI Taxonomy" id="388919"/>
    <lineage>
        <taxon>Bacteria</taxon>
        <taxon>Bacillati</taxon>
        <taxon>Bacillota</taxon>
        <taxon>Bacilli</taxon>
        <taxon>Lactobacillales</taxon>
        <taxon>Streptococcaceae</taxon>
        <taxon>Streptococcus</taxon>
    </lineage>
</organism>
<keyword id="KW-1003">Cell membrane</keyword>
<keyword id="KW-0169">Cobalamin biosynthesis</keyword>
<keyword id="KW-0170">Cobalt</keyword>
<keyword id="KW-0171">Cobalt transport</keyword>
<keyword id="KW-0406">Ion transport</keyword>
<keyword id="KW-0472">Membrane</keyword>
<keyword id="KW-1185">Reference proteome</keyword>
<keyword id="KW-0732">Signal</keyword>
<keyword id="KW-0812">Transmembrane</keyword>
<keyword id="KW-1133">Transmembrane helix</keyword>
<keyword id="KW-0813">Transport</keyword>
<evidence type="ECO:0000255" key="1">
    <source>
        <dbReference type="HAMAP-Rule" id="MF_01462"/>
    </source>
</evidence>
<evidence type="ECO:0000305" key="2"/>
<comment type="function">
    <text evidence="1">Part of the energy-coupling factor (ECF) transporter complex CbiMNOQ involved in cobalt import.</text>
</comment>
<comment type="pathway">
    <text evidence="1">Cofactor biosynthesis; adenosylcobalamin biosynthesis.</text>
</comment>
<comment type="subunit">
    <text evidence="1">Forms an energy-coupling factor (ECF) transporter complex composed of an ATP-binding protein (A component, CbiO), a transmembrane protein (T component, CbiQ) and 2 possible substrate-capture proteins (S components, CbiM and CbiN) of unknown stoichimetry.</text>
</comment>
<comment type="subcellular location">
    <subcellularLocation>
        <location evidence="1">Cell membrane</location>
        <topology evidence="1">Multi-pass membrane protein</topology>
    </subcellularLocation>
</comment>
<comment type="similarity">
    <text evidence="1">Belongs to the CbiM family.</text>
</comment>
<comment type="sequence caution" evidence="2">
    <conflict type="erroneous initiation">
        <sequence resource="EMBL-CDS" id="ABN43925"/>
    </conflict>
    <text>Extended N-terminus.</text>
</comment>
<proteinExistence type="inferred from homology"/>
<accession>A3CL70</accession>
<name>CBIM_STRSV</name>
<gene>
    <name evidence="1" type="primary">cbiM</name>
    <name type="ordered locus">SSA_0477</name>
</gene>
<dbReference type="EMBL" id="CP000387">
    <property type="protein sequence ID" value="ABN43925.1"/>
    <property type="status" value="ALT_INIT"/>
    <property type="molecule type" value="Genomic_DNA"/>
</dbReference>
<dbReference type="RefSeq" id="WP_002901131.1">
    <property type="nucleotide sequence ID" value="NC_009009.1"/>
</dbReference>
<dbReference type="RefSeq" id="YP_001034475.1">
    <property type="nucleotide sequence ID" value="NC_009009.1"/>
</dbReference>
<dbReference type="SMR" id="A3CL70"/>
<dbReference type="STRING" id="388919.SSA_0477"/>
<dbReference type="KEGG" id="ssa:SSA_0477"/>
<dbReference type="PATRIC" id="fig|388919.9.peg.461"/>
<dbReference type="eggNOG" id="COG0310">
    <property type="taxonomic scope" value="Bacteria"/>
</dbReference>
<dbReference type="HOGENOM" id="CLU_052508_3_0_9"/>
<dbReference type="OrthoDB" id="9809846at2"/>
<dbReference type="UniPathway" id="UPA00148"/>
<dbReference type="Proteomes" id="UP000002148">
    <property type="component" value="Chromosome"/>
</dbReference>
<dbReference type="GO" id="GO:0043190">
    <property type="term" value="C:ATP-binding cassette (ABC) transporter complex"/>
    <property type="evidence" value="ECO:0007669"/>
    <property type="project" value="InterPro"/>
</dbReference>
<dbReference type="GO" id="GO:0015087">
    <property type="term" value="F:cobalt ion transmembrane transporter activity"/>
    <property type="evidence" value="ECO:0007669"/>
    <property type="project" value="UniProtKB-UniRule"/>
</dbReference>
<dbReference type="GO" id="GO:0009236">
    <property type="term" value="P:cobalamin biosynthetic process"/>
    <property type="evidence" value="ECO:0007669"/>
    <property type="project" value="UniProtKB-UniRule"/>
</dbReference>
<dbReference type="FunFam" id="1.10.1760.20:FF:000001">
    <property type="entry name" value="Cobalt transport protein CbiM"/>
    <property type="match status" value="1"/>
</dbReference>
<dbReference type="Gene3D" id="1.10.1760.20">
    <property type="match status" value="1"/>
</dbReference>
<dbReference type="HAMAP" id="MF_01462">
    <property type="entry name" value="CbiM"/>
    <property type="match status" value="1"/>
</dbReference>
<dbReference type="InterPro" id="IPR018024">
    <property type="entry name" value="CbiM"/>
</dbReference>
<dbReference type="InterPro" id="IPR002751">
    <property type="entry name" value="CbiM/NikMN"/>
</dbReference>
<dbReference type="NCBIfam" id="TIGR00123">
    <property type="entry name" value="cbiM"/>
    <property type="match status" value="1"/>
</dbReference>
<dbReference type="NCBIfam" id="NF006184">
    <property type="entry name" value="PRK08319.1"/>
    <property type="match status" value="1"/>
</dbReference>
<dbReference type="PANTHER" id="PTHR43627">
    <property type="match status" value="1"/>
</dbReference>
<dbReference type="PANTHER" id="PTHR43627:SF1">
    <property type="entry name" value="COBALT TRANSPORT PROTEIN CBIM"/>
    <property type="match status" value="1"/>
</dbReference>
<dbReference type="Pfam" id="PF01891">
    <property type="entry name" value="CbiM"/>
    <property type="match status" value="1"/>
</dbReference>